<proteinExistence type="inferred from homology"/>
<comment type="function">
    <text evidence="1">May be involved in vacuolar sorting and osmoregulation.</text>
</comment>
<comment type="cofactor">
    <cofactor evidence="2">
        <name>Zn(2+)</name>
        <dbReference type="ChEBI" id="CHEBI:29105"/>
    </cofactor>
    <text evidence="2">Binds 2 Zn(2+) ions per subunit.</text>
</comment>
<comment type="subcellular location">
    <subcellularLocation>
        <location evidence="1">Vacuole membrane</location>
        <topology evidence="3">Multi-pass membrane protein</topology>
    </subcellularLocation>
</comment>
<comment type="similarity">
    <text evidence="6">Belongs to the peptidase M28 family.</text>
</comment>
<evidence type="ECO:0000250" key="1">
    <source>
        <dbReference type="UniProtKB" id="P38244"/>
    </source>
</evidence>
<evidence type="ECO:0000250" key="2">
    <source>
        <dbReference type="UniProtKB" id="P80561"/>
    </source>
</evidence>
<evidence type="ECO:0000255" key="3"/>
<evidence type="ECO:0000255" key="4">
    <source>
        <dbReference type="PROSITE-ProRule" id="PRU00498"/>
    </source>
</evidence>
<evidence type="ECO:0000256" key="5">
    <source>
        <dbReference type="SAM" id="MobiDB-lite"/>
    </source>
</evidence>
<evidence type="ECO:0000305" key="6"/>
<gene>
    <name type="ORF">SCY_0288</name>
</gene>
<dbReference type="EC" id="3.4.-.-" evidence="6"/>
<dbReference type="EMBL" id="AAFW02000011">
    <property type="protein sequence ID" value="EDN64687.1"/>
    <property type="molecule type" value="Genomic_DNA"/>
</dbReference>
<dbReference type="SMR" id="A6ZL18"/>
<dbReference type="HOGENOM" id="CLU_006412_1_0_1"/>
<dbReference type="Proteomes" id="UP000007060">
    <property type="component" value="Unassembled WGS sequence"/>
</dbReference>
<dbReference type="GO" id="GO:0005774">
    <property type="term" value="C:vacuolar membrane"/>
    <property type="evidence" value="ECO:0007669"/>
    <property type="project" value="UniProtKB-SubCell"/>
</dbReference>
<dbReference type="GO" id="GO:0046872">
    <property type="term" value="F:metal ion binding"/>
    <property type="evidence" value="ECO:0007669"/>
    <property type="project" value="UniProtKB-KW"/>
</dbReference>
<dbReference type="GO" id="GO:0008235">
    <property type="term" value="F:metalloexopeptidase activity"/>
    <property type="evidence" value="ECO:0007669"/>
    <property type="project" value="InterPro"/>
</dbReference>
<dbReference type="GO" id="GO:0006508">
    <property type="term" value="P:proteolysis"/>
    <property type="evidence" value="ECO:0007669"/>
    <property type="project" value="UniProtKB-KW"/>
</dbReference>
<dbReference type="CDD" id="cd03875">
    <property type="entry name" value="M28_Fxna_like"/>
    <property type="match status" value="1"/>
</dbReference>
<dbReference type="FunFam" id="3.40.630.10:FF:000057">
    <property type="entry name" value="Vacuolar membrane protease"/>
    <property type="match status" value="1"/>
</dbReference>
<dbReference type="Gene3D" id="3.40.630.10">
    <property type="entry name" value="Zn peptidases"/>
    <property type="match status" value="1"/>
</dbReference>
<dbReference type="InterPro" id="IPR048024">
    <property type="entry name" value="Fxna-like_M28_dom"/>
</dbReference>
<dbReference type="InterPro" id="IPR045175">
    <property type="entry name" value="M28_fam"/>
</dbReference>
<dbReference type="InterPro" id="IPR007484">
    <property type="entry name" value="Peptidase_M28"/>
</dbReference>
<dbReference type="InterPro" id="IPR053975">
    <property type="entry name" value="PFF1_C"/>
</dbReference>
<dbReference type="InterPro" id="IPR053976">
    <property type="entry name" value="PFF1_TM"/>
</dbReference>
<dbReference type="PANTHER" id="PTHR12147">
    <property type="entry name" value="METALLOPEPTIDASE M28 FAMILY MEMBER"/>
    <property type="match status" value="1"/>
</dbReference>
<dbReference type="PANTHER" id="PTHR12147:SF58">
    <property type="entry name" value="VACUOLAR MEMBRANE PROTEASE"/>
    <property type="match status" value="1"/>
</dbReference>
<dbReference type="Pfam" id="PF04389">
    <property type="entry name" value="Peptidase_M28"/>
    <property type="match status" value="1"/>
</dbReference>
<dbReference type="Pfam" id="PF22250">
    <property type="entry name" value="PFF1_C"/>
    <property type="match status" value="1"/>
</dbReference>
<dbReference type="Pfam" id="PF22251">
    <property type="entry name" value="PFF1_TM"/>
    <property type="match status" value="1"/>
</dbReference>
<dbReference type="SUPFAM" id="SSF53187">
    <property type="entry name" value="Zn-dependent exopeptidases"/>
    <property type="match status" value="1"/>
</dbReference>
<keyword id="KW-0325">Glycoprotein</keyword>
<keyword id="KW-0378">Hydrolase</keyword>
<keyword id="KW-0472">Membrane</keyword>
<keyword id="KW-0479">Metal-binding</keyword>
<keyword id="KW-0482">Metalloprotease</keyword>
<keyword id="KW-0645">Protease</keyword>
<keyword id="KW-0812">Transmembrane</keyword>
<keyword id="KW-1133">Transmembrane helix</keyword>
<keyword id="KW-0926">Vacuole</keyword>
<keyword id="KW-0862">Zinc</keyword>
<sequence>MKLKSVFRSVLKYRKTNLSLLLLITYSIITLLYIFDHERYKLNLPKEDEHPEFNDLLETAWGDLQIITASFHPYTSKENDKVHDYLLKRVLEITGNSSFASVSDDKESERSILFQQQDPFNESSRFSRVTYFESSNILVKLEGKNPEEEGLLLSAHFDSVPTGYGATDDGMGVVSLLANLKYHIKHRPNRTLIFNFNNNEEFGLLGASTYFNHSWSNLTKYVINLEGTGAGGKAVLFRTSDTSTAKIYQQSVKENPFGNSIYQQGFYSRYVRSETDYKIYEENGMRGWDVAFYKPRNLYHTIKDSIQYTSKASLWHMLHTSLQLSAYVASNSLDTADQTPACYFDFIGLKFFVISAKTLFYWNCIFLLVSPVVAIGLYLISRDRMTWKSHSWLSWTRFPLSLAAGIIVQKLFSNDIIRSNPLTFSRNYFWPISAFFTQVIFTSYVLINCSNFFFPCADMKSLSIIELFIILWTILLFTSKLLYSSDYRYTGLYPLSIFFLLSTIAAILRLLALALGMRTRKRLGRECRDHHSNYSSHSQIDMERDGQENLEQPQDQFTSSQDDQASIQDDNVSTTSAGPSHNVDEDHGMDSSSQQHDERVPLLKGSNSMEEGLSTRENSLKLEYTDYAWIIQFLLIVPIPSFILFNSVDVIMDALNHTVQEGSKATFDVLRFGMVGSILMALPILPFFYKVNYITISLTALLFLISASKTLLVHPFTNSNPLKVRFSQNIDLSQGNAASVHVLGREGNFLKPMLQDLPSIKYSSTHINCTSVTNGMELCMYDGMQPNLLSTNGNTNISSMVKVHVLHNNRNSTERSPYEPIVAELLLEVKENRACTLTFESRHQAKSPVREITVYQKKNSAPQKANITKTIKSASGINELQLHKLDFDQETYHIGVQWFPKLLTDGNLEDDKLGTKDELSVSISCYWGEYDSESVVNGTAVRKIPAFDELINYAPLSFSFTNEQKGLVIVKDAIIL</sequence>
<organism>
    <name type="scientific">Saccharomyces cerevisiae (strain YJM789)</name>
    <name type="common">Baker's yeast</name>
    <dbReference type="NCBI Taxonomy" id="307796"/>
    <lineage>
        <taxon>Eukaryota</taxon>
        <taxon>Fungi</taxon>
        <taxon>Dikarya</taxon>
        <taxon>Ascomycota</taxon>
        <taxon>Saccharomycotina</taxon>
        <taxon>Saccharomycetes</taxon>
        <taxon>Saccharomycetales</taxon>
        <taxon>Saccharomycetaceae</taxon>
        <taxon>Saccharomyces</taxon>
    </lineage>
</organism>
<reference key="1">
    <citation type="journal article" date="2007" name="Proc. Natl. Acad. Sci. U.S.A.">
        <title>Genome sequencing and comparative analysis of Saccharomyces cerevisiae strain YJM789.</title>
        <authorList>
            <person name="Wei W."/>
            <person name="McCusker J.H."/>
            <person name="Hyman R.W."/>
            <person name="Jones T."/>
            <person name="Ning Y."/>
            <person name="Cao Z."/>
            <person name="Gu Z."/>
            <person name="Bruno D."/>
            <person name="Miranda M."/>
            <person name="Nguyen M."/>
            <person name="Wilhelmy J."/>
            <person name="Komp C."/>
            <person name="Tamse R."/>
            <person name="Wang X."/>
            <person name="Jia P."/>
            <person name="Luedi P."/>
            <person name="Oefner P.J."/>
            <person name="David L."/>
            <person name="Dietrich F.S."/>
            <person name="Li Y."/>
            <person name="Davis R.W."/>
            <person name="Steinmetz L.M."/>
        </authorList>
    </citation>
    <scope>NUCLEOTIDE SEQUENCE [LARGE SCALE GENOMIC DNA]</scope>
    <source>
        <strain>YJM789</strain>
    </source>
</reference>
<feature type="chain" id="PRO_0000411753" description="Vacuolar membrane protease">
    <location>
        <begin position="1"/>
        <end position="976"/>
    </location>
</feature>
<feature type="topological domain" description="Cytoplasmic" evidence="1">
    <location>
        <begin position="1"/>
        <end position="15"/>
    </location>
</feature>
<feature type="transmembrane region" description="Helical; Name=1" evidence="3">
    <location>
        <begin position="16"/>
        <end position="36"/>
    </location>
</feature>
<feature type="topological domain" description="Vacuolar" evidence="1">
    <location>
        <begin position="37"/>
        <end position="359"/>
    </location>
</feature>
<feature type="transmembrane region" description="Helical; Name=2" evidence="3">
    <location>
        <begin position="360"/>
        <end position="380"/>
    </location>
</feature>
<feature type="topological domain" description="Cytoplasmic" evidence="1">
    <location>
        <begin position="381"/>
        <end position="392"/>
    </location>
</feature>
<feature type="transmembrane region" description="Helical; Name=3" evidence="3">
    <location>
        <begin position="393"/>
        <end position="412"/>
    </location>
</feature>
<feature type="topological domain" description="Vacuolar" evidence="1">
    <location>
        <begin position="413"/>
        <end position="428"/>
    </location>
</feature>
<feature type="transmembrane region" description="Helical; Name=4" evidence="3">
    <location>
        <begin position="429"/>
        <end position="449"/>
    </location>
</feature>
<feature type="topological domain" description="Cytoplasmic" evidence="1">
    <location>
        <begin position="450"/>
        <end position="461"/>
    </location>
</feature>
<feature type="transmembrane region" description="Helical; Name=5" evidence="3">
    <location>
        <begin position="462"/>
        <end position="482"/>
    </location>
</feature>
<feature type="topological domain" description="Vacuolar" evidence="1">
    <location>
        <begin position="483"/>
        <end position="496"/>
    </location>
</feature>
<feature type="transmembrane region" description="Helical; Name=6" evidence="3">
    <location>
        <begin position="497"/>
        <end position="517"/>
    </location>
</feature>
<feature type="topological domain" description="Cytoplasmic" evidence="1">
    <location>
        <begin position="518"/>
        <end position="627"/>
    </location>
</feature>
<feature type="transmembrane region" description="Helical; Name=7" evidence="3">
    <location>
        <begin position="628"/>
        <end position="648"/>
    </location>
</feature>
<feature type="topological domain" description="Vacuolar" evidence="1">
    <location>
        <begin position="649"/>
        <end position="668"/>
    </location>
</feature>
<feature type="transmembrane region" description="Helical; Name=8" evidence="3">
    <location>
        <begin position="669"/>
        <end position="689"/>
    </location>
</feature>
<feature type="topological domain" description="Cytoplasmic" evidence="1">
    <location>
        <begin position="690"/>
        <end position="692"/>
    </location>
</feature>
<feature type="transmembrane region" description="Helical; Name=9" evidence="3">
    <location>
        <begin position="693"/>
        <end position="713"/>
    </location>
</feature>
<feature type="topological domain" description="Vacuolar" evidence="1">
    <location>
        <begin position="714"/>
        <end position="976"/>
    </location>
</feature>
<feature type="region of interest" description="Disordered" evidence="5">
    <location>
        <begin position="528"/>
        <end position="610"/>
    </location>
</feature>
<feature type="compositionally biased region" description="Polar residues" evidence="5">
    <location>
        <begin position="549"/>
        <end position="558"/>
    </location>
</feature>
<feature type="compositionally biased region" description="Low complexity" evidence="5">
    <location>
        <begin position="559"/>
        <end position="570"/>
    </location>
</feature>
<feature type="compositionally biased region" description="Basic and acidic residues" evidence="5">
    <location>
        <begin position="582"/>
        <end position="601"/>
    </location>
</feature>
<feature type="active site" description="Proton acceptor" evidence="2">
    <location>
        <position position="200"/>
    </location>
</feature>
<feature type="binding site" evidence="2">
    <location>
        <position position="156"/>
    </location>
    <ligand>
        <name>Zn(2+)</name>
        <dbReference type="ChEBI" id="CHEBI:29105"/>
        <label>1</label>
        <note>catalytic</note>
    </ligand>
</feature>
<feature type="binding site" evidence="2">
    <location>
        <position position="168"/>
    </location>
    <ligand>
        <name>Zn(2+)</name>
        <dbReference type="ChEBI" id="CHEBI:29105"/>
        <label>1</label>
        <note>catalytic</note>
    </ligand>
</feature>
<feature type="binding site" evidence="2">
    <location>
        <position position="168"/>
    </location>
    <ligand>
        <name>Zn(2+)</name>
        <dbReference type="ChEBI" id="CHEBI:29105"/>
        <label>2</label>
        <note>catalytic</note>
    </ligand>
</feature>
<feature type="binding site" evidence="2">
    <location>
        <position position="201"/>
    </location>
    <ligand>
        <name>Zn(2+)</name>
        <dbReference type="ChEBI" id="CHEBI:29105"/>
        <label>2</label>
        <note>catalytic</note>
    </ligand>
</feature>
<feature type="binding site" evidence="2">
    <location>
        <position position="226"/>
    </location>
    <ligand>
        <name>Zn(2+)</name>
        <dbReference type="ChEBI" id="CHEBI:29105"/>
        <label>1</label>
        <note>catalytic</note>
    </ligand>
</feature>
<feature type="binding site" evidence="2">
    <location>
        <position position="300"/>
    </location>
    <ligand>
        <name>Zn(2+)</name>
        <dbReference type="ChEBI" id="CHEBI:29105"/>
        <label>2</label>
        <note>catalytic</note>
    </ligand>
</feature>
<feature type="site" description="Transition state stabilizer" evidence="2">
    <location>
        <position position="299"/>
    </location>
</feature>
<feature type="glycosylation site" description="N-linked (GlcNAc...) asparagine" evidence="4">
    <location>
        <position position="96"/>
    </location>
</feature>
<feature type="glycosylation site" description="N-linked (GlcNAc...) asparagine" evidence="4">
    <location>
        <position position="121"/>
    </location>
</feature>
<feature type="glycosylation site" description="N-linked (GlcNAc...) asparagine" evidence="4">
    <location>
        <position position="189"/>
    </location>
</feature>
<feature type="glycosylation site" description="N-linked (GlcNAc...) asparagine" evidence="4">
    <location>
        <position position="212"/>
    </location>
</feature>
<feature type="glycosylation site" description="N-linked (GlcNAc...) asparagine" evidence="4">
    <location>
        <position position="217"/>
    </location>
</feature>
<feature type="glycosylation site" description="N-linked (GlcNAc...) asparagine" evidence="4">
    <location>
        <position position="656"/>
    </location>
</feature>
<feature type="glycosylation site" description="N-linked (GlcNAc...) asparagine" evidence="4">
    <location>
        <position position="768"/>
    </location>
</feature>
<feature type="glycosylation site" description="N-linked (GlcNAc...) asparagine" evidence="4">
    <location>
        <position position="796"/>
    </location>
</feature>
<feature type="glycosylation site" description="N-linked (GlcNAc...) asparagine" evidence="4">
    <location>
        <position position="811"/>
    </location>
</feature>
<feature type="glycosylation site" description="N-linked (GlcNAc...) asparagine" evidence="4">
    <location>
        <position position="866"/>
    </location>
</feature>
<feature type="glycosylation site" description="N-linked (GlcNAc...) asparagine" evidence="4">
    <location>
        <position position="937"/>
    </location>
</feature>
<protein>
    <recommendedName>
        <fullName evidence="1">Vacuolar membrane protease</fullName>
        <ecNumber evidence="6">3.4.-.-</ecNumber>
    </recommendedName>
    <alternativeName>
        <fullName evidence="1">FXNA-related family protease 1</fullName>
    </alternativeName>
</protein>
<name>PFF1_YEAS7</name>
<accession>A6ZL18</accession>